<proteinExistence type="predicted"/>
<organismHost>
    <name type="scientific">Acidianus convivator</name>
    <dbReference type="NCBI Taxonomy" id="269667"/>
</organismHost>
<organism>
    <name type="scientific">Acidianus two-tailed virus</name>
    <name type="common">ATV</name>
    <dbReference type="NCBI Taxonomy" id="315953"/>
    <lineage>
        <taxon>Viruses</taxon>
        <taxon>Viruses incertae sedis</taxon>
        <taxon>Bicaudaviridae</taxon>
        <taxon>Bicaudavirus</taxon>
    </lineage>
</organism>
<dbReference type="EMBL" id="AJ888457">
    <property type="protein sequence ID" value="CAI59899.1"/>
    <property type="molecule type" value="Genomic_DNA"/>
</dbReference>
<dbReference type="RefSeq" id="YP_319876.1">
    <property type="nucleotide sequence ID" value="NC_007409.1"/>
</dbReference>
<dbReference type="SMR" id="Q3V4R5"/>
<dbReference type="GeneID" id="4484255"/>
<dbReference type="KEGG" id="vg:4484255"/>
<dbReference type="Proteomes" id="UP000002150">
    <property type="component" value="Genome"/>
</dbReference>
<accession>Q3V4R5</accession>
<reference key="1">
    <citation type="journal article" date="2005" name="Nature">
        <title>Virology: independent virus development outside a host.</title>
        <authorList>
            <person name="Haring M."/>
            <person name="Vestergaard G."/>
            <person name="Rachel R."/>
            <person name="Chen L."/>
            <person name="Garrett R.A."/>
            <person name="Prangishvili D."/>
        </authorList>
    </citation>
    <scope>NUCLEOTIDE SEQUENCE [GENOMIC DNA]</scope>
</reference>
<keyword id="KW-0175">Coiled coil</keyword>
<keyword id="KW-1185">Reference proteome</keyword>
<protein>
    <recommendedName>
        <fullName>Uncharacterized protein ORF161b</fullName>
    </recommendedName>
</protein>
<feature type="chain" id="PRO_0000389068" description="Uncharacterized protein ORF161b">
    <location>
        <begin position="1"/>
        <end position="161"/>
    </location>
</feature>
<feature type="coiled-coil region" evidence="1">
    <location>
        <begin position="1"/>
        <end position="29"/>
    </location>
</feature>
<sequence length="161" mass="18544">MTLYDTVKELQEKLRNGEIEINTFLERLGLTLDSIWSQKLRVTGLFKYNVIKATLLSIAKTTCMYYFNKIPDVEAEDSIITTLTKIYSFISQNVKENRDKFETELVAFGKQNEIKSVADSIMIMIVENLMASLGYTETEKKYIPISDFMIRLQNIQNTTGS</sequence>
<name>Y161B_ATV</name>
<evidence type="ECO:0000255" key="1"/>